<sequence length="424" mass="45454">MSNTQPFFSQPLAERDAPVRSAILKELERQQSQVELIASENIVSRAVLEAQGSVLTNKYAEGYPGKRYYGGCEFADEVEALAIDRVKQIFNAGYANVQPHSGAQANGSVMLALAKPGDTVLGMSLDAGGHLTHGAKPALSGKWFNAVQYGVNRDTMLIDYDQVEALAHEHKPNLIIAGFSAYPRALDFARFRAIADSVGAKLMVDMAHIAGVIAAGRHANPVEHAHVVTSTTHKTLRGPRGGFVLTNDEDIAKKINSAVFPGLQGGPLMHVIAGKAVAFGEVLQADFKTYIDNVLANAQALGEVLKAGGVDLVTGGTDNHLLLVDLRPKGLKGAPVEQALERAGITCNKNGIPFDTEKPTVTSGIRLGTPAGTTRGFGVAEFREVGRLILEVFDALRANPEGDHATEQRVRREIFALCERFPIY</sequence>
<feature type="chain" id="PRO_0000234957" description="Serine hydroxymethyltransferase 1">
    <location>
        <begin position="1"/>
        <end position="424"/>
    </location>
</feature>
<feature type="binding site" evidence="1">
    <location>
        <position position="125"/>
    </location>
    <ligand>
        <name>(6S)-5,6,7,8-tetrahydrofolate</name>
        <dbReference type="ChEBI" id="CHEBI:57453"/>
    </ligand>
</feature>
<feature type="binding site" evidence="1">
    <location>
        <begin position="129"/>
        <end position="131"/>
    </location>
    <ligand>
        <name>(6S)-5,6,7,8-tetrahydrofolate</name>
        <dbReference type="ChEBI" id="CHEBI:57453"/>
    </ligand>
</feature>
<feature type="site" description="Plays an important role in substrate specificity" evidence="1">
    <location>
        <position position="233"/>
    </location>
</feature>
<feature type="modified residue" description="N6-(pyridoxal phosphate)lysine" evidence="1">
    <location>
        <position position="234"/>
    </location>
</feature>
<name>GLYA1_BURL3</name>
<evidence type="ECO:0000255" key="1">
    <source>
        <dbReference type="HAMAP-Rule" id="MF_00051"/>
    </source>
</evidence>
<comment type="function">
    <text evidence="1">Catalyzes the reversible interconversion of serine and glycine with tetrahydrofolate (THF) serving as the one-carbon carrier. This reaction serves as the major source of one-carbon groups required for the biosynthesis of purines, thymidylate, methionine, and other important biomolecules. Also exhibits THF-independent aldolase activity toward beta-hydroxyamino acids, producing glycine and aldehydes, via a retro-aldol mechanism.</text>
</comment>
<comment type="catalytic activity">
    <reaction evidence="1">
        <text>(6R)-5,10-methylene-5,6,7,8-tetrahydrofolate + glycine + H2O = (6S)-5,6,7,8-tetrahydrofolate + L-serine</text>
        <dbReference type="Rhea" id="RHEA:15481"/>
        <dbReference type="ChEBI" id="CHEBI:15377"/>
        <dbReference type="ChEBI" id="CHEBI:15636"/>
        <dbReference type="ChEBI" id="CHEBI:33384"/>
        <dbReference type="ChEBI" id="CHEBI:57305"/>
        <dbReference type="ChEBI" id="CHEBI:57453"/>
        <dbReference type="EC" id="2.1.2.1"/>
    </reaction>
</comment>
<comment type="cofactor">
    <cofactor evidence="1">
        <name>pyridoxal 5'-phosphate</name>
        <dbReference type="ChEBI" id="CHEBI:597326"/>
    </cofactor>
</comment>
<comment type="pathway">
    <text evidence="1">One-carbon metabolism; tetrahydrofolate interconversion.</text>
</comment>
<comment type="pathway">
    <text evidence="1">Amino-acid biosynthesis; glycine biosynthesis; glycine from L-serine: step 1/1.</text>
</comment>
<comment type="subunit">
    <text evidence="1">Homodimer.</text>
</comment>
<comment type="subcellular location">
    <subcellularLocation>
        <location evidence="1">Cytoplasm</location>
    </subcellularLocation>
</comment>
<comment type="similarity">
    <text evidence="1">Belongs to the SHMT family.</text>
</comment>
<organism>
    <name type="scientific">Burkholderia lata (strain ATCC 17760 / DSM 23089 / LMG 22485 / NCIMB 9086 / R18194 / 383)</name>
    <dbReference type="NCBI Taxonomy" id="482957"/>
    <lineage>
        <taxon>Bacteria</taxon>
        <taxon>Pseudomonadati</taxon>
        <taxon>Pseudomonadota</taxon>
        <taxon>Betaproteobacteria</taxon>
        <taxon>Burkholderiales</taxon>
        <taxon>Burkholderiaceae</taxon>
        <taxon>Burkholderia</taxon>
        <taxon>Burkholderia cepacia complex</taxon>
    </lineage>
</organism>
<keyword id="KW-0028">Amino-acid biosynthesis</keyword>
<keyword id="KW-0963">Cytoplasm</keyword>
<keyword id="KW-0554">One-carbon metabolism</keyword>
<keyword id="KW-0663">Pyridoxal phosphate</keyword>
<keyword id="KW-0808">Transferase</keyword>
<proteinExistence type="inferred from homology"/>
<dbReference type="EC" id="2.1.2.1" evidence="1"/>
<dbReference type="EMBL" id="CP000152">
    <property type="protein sequence ID" value="ABB10685.1"/>
    <property type="molecule type" value="Genomic_DNA"/>
</dbReference>
<dbReference type="RefSeq" id="WP_011354180.1">
    <property type="nucleotide sequence ID" value="NC_007511.1"/>
</dbReference>
<dbReference type="SMR" id="Q39A26"/>
<dbReference type="GeneID" id="45096945"/>
<dbReference type="KEGG" id="bur:Bcep18194_B0571"/>
<dbReference type="PATRIC" id="fig|482957.22.peg.4177"/>
<dbReference type="HOGENOM" id="CLU_022477_2_1_4"/>
<dbReference type="UniPathway" id="UPA00193"/>
<dbReference type="UniPathway" id="UPA00288">
    <property type="reaction ID" value="UER01023"/>
</dbReference>
<dbReference type="Proteomes" id="UP000002705">
    <property type="component" value="Chromosome 2"/>
</dbReference>
<dbReference type="GO" id="GO:0005829">
    <property type="term" value="C:cytosol"/>
    <property type="evidence" value="ECO:0007669"/>
    <property type="project" value="TreeGrafter"/>
</dbReference>
<dbReference type="GO" id="GO:0004372">
    <property type="term" value="F:glycine hydroxymethyltransferase activity"/>
    <property type="evidence" value="ECO:0007669"/>
    <property type="project" value="UniProtKB-UniRule"/>
</dbReference>
<dbReference type="GO" id="GO:0030170">
    <property type="term" value="F:pyridoxal phosphate binding"/>
    <property type="evidence" value="ECO:0007669"/>
    <property type="project" value="UniProtKB-UniRule"/>
</dbReference>
<dbReference type="GO" id="GO:0019264">
    <property type="term" value="P:glycine biosynthetic process from serine"/>
    <property type="evidence" value="ECO:0007669"/>
    <property type="project" value="UniProtKB-UniRule"/>
</dbReference>
<dbReference type="GO" id="GO:0035999">
    <property type="term" value="P:tetrahydrofolate interconversion"/>
    <property type="evidence" value="ECO:0007669"/>
    <property type="project" value="UniProtKB-UniRule"/>
</dbReference>
<dbReference type="CDD" id="cd00378">
    <property type="entry name" value="SHMT"/>
    <property type="match status" value="1"/>
</dbReference>
<dbReference type="FunFam" id="3.40.640.10:FF:000001">
    <property type="entry name" value="Serine hydroxymethyltransferase"/>
    <property type="match status" value="1"/>
</dbReference>
<dbReference type="Gene3D" id="3.90.1150.10">
    <property type="entry name" value="Aspartate Aminotransferase, domain 1"/>
    <property type="match status" value="1"/>
</dbReference>
<dbReference type="Gene3D" id="3.40.640.10">
    <property type="entry name" value="Type I PLP-dependent aspartate aminotransferase-like (Major domain)"/>
    <property type="match status" value="1"/>
</dbReference>
<dbReference type="HAMAP" id="MF_00051">
    <property type="entry name" value="SHMT"/>
    <property type="match status" value="1"/>
</dbReference>
<dbReference type="InterPro" id="IPR015424">
    <property type="entry name" value="PyrdxlP-dep_Trfase"/>
</dbReference>
<dbReference type="InterPro" id="IPR015421">
    <property type="entry name" value="PyrdxlP-dep_Trfase_major"/>
</dbReference>
<dbReference type="InterPro" id="IPR015422">
    <property type="entry name" value="PyrdxlP-dep_Trfase_small"/>
</dbReference>
<dbReference type="InterPro" id="IPR001085">
    <property type="entry name" value="Ser_HO-MeTrfase"/>
</dbReference>
<dbReference type="InterPro" id="IPR049943">
    <property type="entry name" value="Ser_HO-MeTrfase-like"/>
</dbReference>
<dbReference type="InterPro" id="IPR019798">
    <property type="entry name" value="Ser_HO-MeTrfase_PLP_BS"/>
</dbReference>
<dbReference type="InterPro" id="IPR039429">
    <property type="entry name" value="SHMT-like_dom"/>
</dbReference>
<dbReference type="NCBIfam" id="NF000586">
    <property type="entry name" value="PRK00011.1"/>
    <property type="match status" value="1"/>
</dbReference>
<dbReference type="PANTHER" id="PTHR11680">
    <property type="entry name" value="SERINE HYDROXYMETHYLTRANSFERASE"/>
    <property type="match status" value="1"/>
</dbReference>
<dbReference type="PANTHER" id="PTHR11680:SF35">
    <property type="entry name" value="SERINE HYDROXYMETHYLTRANSFERASE 1"/>
    <property type="match status" value="1"/>
</dbReference>
<dbReference type="Pfam" id="PF00464">
    <property type="entry name" value="SHMT"/>
    <property type="match status" value="1"/>
</dbReference>
<dbReference type="PIRSF" id="PIRSF000412">
    <property type="entry name" value="SHMT"/>
    <property type="match status" value="1"/>
</dbReference>
<dbReference type="SUPFAM" id="SSF53383">
    <property type="entry name" value="PLP-dependent transferases"/>
    <property type="match status" value="1"/>
</dbReference>
<dbReference type="PROSITE" id="PS00096">
    <property type="entry name" value="SHMT"/>
    <property type="match status" value="1"/>
</dbReference>
<reference key="1">
    <citation type="submission" date="2005-10" db="EMBL/GenBank/DDBJ databases">
        <title>Complete sequence of chromosome 2 of Burkholderia sp. 383.</title>
        <authorList>
            <consortium name="US DOE Joint Genome Institute"/>
            <person name="Copeland A."/>
            <person name="Lucas S."/>
            <person name="Lapidus A."/>
            <person name="Barry K."/>
            <person name="Detter J.C."/>
            <person name="Glavina T."/>
            <person name="Hammon N."/>
            <person name="Israni S."/>
            <person name="Pitluck S."/>
            <person name="Chain P."/>
            <person name="Malfatti S."/>
            <person name="Shin M."/>
            <person name="Vergez L."/>
            <person name="Schmutz J."/>
            <person name="Larimer F."/>
            <person name="Land M."/>
            <person name="Kyrpides N."/>
            <person name="Lykidis A."/>
            <person name="Richardson P."/>
        </authorList>
    </citation>
    <scope>NUCLEOTIDE SEQUENCE [LARGE SCALE GENOMIC DNA]</scope>
    <source>
        <strain>ATCC 17760 / DSM 23089 / LMG 22485 / NCIMB 9086 / R18194 / 383</strain>
    </source>
</reference>
<accession>Q39A26</accession>
<protein>
    <recommendedName>
        <fullName evidence="1">Serine hydroxymethyltransferase 1</fullName>
        <shortName evidence="1">SHMT 1</shortName>
        <shortName evidence="1">Serine methylase 1</shortName>
        <ecNumber evidence="1">2.1.2.1</ecNumber>
    </recommendedName>
</protein>
<gene>
    <name evidence="1" type="primary">glyA1</name>
    <name type="ordered locus">Bcep18194_B0571</name>
</gene>